<name>SDPC_BACSU</name>
<evidence type="ECO:0000269" key="1">
    <source>
    </source>
</evidence>
<evidence type="ECO:0000269" key="2">
    <source>
    </source>
</evidence>
<evidence type="ECO:0000269" key="3">
    <source>
    </source>
</evidence>
<evidence type="ECO:0000269" key="4">
    <source>
    </source>
</evidence>
<evidence type="ECO:0000269" key="5">
    <source>
    </source>
</evidence>
<evidence type="ECO:0000269" key="6">
    <source>
    </source>
</evidence>
<evidence type="ECO:0000269" key="7">
    <source>
    </source>
</evidence>
<evidence type="ECO:0000269" key="8">
    <source>
    </source>
</evidence>
<evidence type="ECO:0000269" key="9">
    <source>
    </source>
</evidence>
<evidence type="ECO:0000303" key="10">
    <source>
    </source>
</evidence>
<evidence type="ECO:0000303" key="11">
    <source>
    </source>
</evidence>
<evidence type="ECO:0000303" key="12">
    <source>
    </source>
</evidence>
<evidence type="ECO:0000305" key="13"/>
<evidence type="ECO:0000305" key="14">
    <source>
    </source>
</evidence>
<organism>
    <name type="scientific">Bacillus subtilis (strain 168)</name>
    <dbReference type="NCBI Taxonomy" id="224308"/>
    <lineage>
        <taxon>Bacteria</taxon>
        <taxon>Bacillati</taxon>
        <taxon>Bacillota</taxon>
        <taxon>Bacilli</taxon>
        <taxon>Bacillales</taxon>
        <taxon>Bacillaceae</taxon>
        <taxon>Bacillus</taxon>
    </lineage>
</organism>
<sequence length="203" mass="22221">MKSKLLRLLIVSMVTILVFSLVGLSKESSTSAKENHTFSGEDYFRGLLFGQGEVGKLISNDLDPKLVKEANSTEGKKLVNDVVKFIKKDQPQYMDELKQSIDSKDPKKLIENMTKADQLIQKYAKKNENVKYSSNKVTPSCGLYAVCVAAGYLYVVGVNAVALQTAAAVTTAVWKYVAKYSSSASNNSDLEAAAAKTLKLIHQ</sequence>
<reference key="1">
    <citation type="submission" date="1997-08" db="EMBL/GenBank/DDBJ databases">
        <authorList>
            <person name="Nakamura A."/>
            <person name="Grau R."/>
            <person name="Perego M."/>
            <person name="Hoch J.A."/>
        </authorList>
    </citation>
    <scope>NUCLEOTIDE SEQUENCE [GENOMIC DNA]</scope>
    <source>
        <strain>168 / JH642</strain>
    </source>
</reference>
<reference key="2">
    <citation type="journal article" date="1997" name="Nature">
        <title>The complete genome sequence of the Gram-positive bacterium Bacillus subtilis.</title>
        <authorList>
            <person name="Kunst F."/>
            <person name="Ogasawara N."/>
            <person name="Moszer I."/>
            <person name="Albertini A.M."/>
            <person name="Alloni G."/>
            <person name="Azevedo V."/>
            <person name="Bertero M.G."/>
            <person name="Bessieres P."/>
            <person name="Bolotin A."/>
            <person name="Borchert S."/>
            <person name="Borriss R."/>
            <person name="Boursier L."/>
            <person name="Brans A."/>
            <person name="Braun M."/>
            <person name="Brignell S.C."/>
            <person name="Bron S."/>
            <person name="Brouillet S."/>
            <person name="Bruschi C.V."/>
            <person name="Caldwell B."/>
            <person name="Capuano V."/>
            <person name="Carter N.M."/>
            <person name="Choi S.-K."/>
            <person name="Codani J.-J."/>
            <person name="Connerton I.F."/>
            <person name="Cummings N.J."/>
            <person name="Daniel R.A."/>
            <person name="Denizot F."/>
            <person name="Devine K.M."/>
            <person name="Duesterhoeft A."/>
            <person name="Ehrlich S.D."/>
            <person name="Emmerson P.T."/>
            <person name="Entian K.-D."/>
            <person name="Errington J."/>
            <person name="Fabret C."/>
            <person name="Ferrari E."/>
            <person name="Foulger D."/>
            <person name="Fritz C."/>
            <person name="Fujita M."/>
            <person name="Fujita Y."/>
            <person name="Fuma S."/>
            <person name="Galizzi A."/>
            <person name="Galleron N."/>
            <person name="Ghim S.-Y."/>
            <person name="Glaser P."/>
            <person name="Goffeau A."/>
            <person name="Golightly E.J."/>
            <person name="Grandi G."/>
            <person name="Guiseppi G."/>
            <person name="Guy B.J."/>
            <person name="Haga K."/>
            <person name="Haiech J."/>
            <person name="Harwood C.R."/>
            <person name="Henaut A."/>
            <person name="Hilbert H."/>
            <person name="Holsappel S."/>
            <person name="Hosono S."/>
            <person name="Hullo M.-F."/>
            <person name="Itaya M."/>
            <person name="Jones L.-M."/>
            <person name="Joris B."/>
            <person name="Karamata D."/>
            <person name="Kasahara Y."/>
            <person name="Klaerr-Blanchard M."/>
            <person name="Klein C."/>
            <person name="Kobayashi Y."/>
            <person name="Koetter P."/>
            <person name="Koningstein G."/>
            <person name="Krogh S."/>
            <person name="Kumano M."/>
            <person name="Kurita K."/>
            <person name="Lapidus A."/>
            <person name="Lardinois S."/>
            <person name="Lauber J."/>
            <person name="Lazarevic V."/>
            <person name="Lee S.-M."/>
            <person name="Levine A."/>
            <person name="Liu H."/>
            <person name="Masuda S."/>
            <person name="Mauel C."/>
            <person name="Medigue C."/>
            <person name="Medina N."/>
            <person name="Mellado R.P."/>
            <person name="Mizuno M."/>
            <person name="Moestl D."/>
            <person name="Nakai S."/>
            <person name="Noback M."/>
            <person name="Noone D."/>
            <person name="O'Reilly M."/>
            <person name="Ogawa K."/>
            <person name="Ogiwara A."/>
            <person name="Oudega B."/>
            <person name="Park S.-H."/>
            <person name="Parro V."/>
            <person name="Pohl T.M."/>
            <person name="Portetelle D."/>
            <person name="Porwollik S."/>
            <person name="Prescott A.M."/>
            <person name="Presecan E."/>
            <person name="Pujic P."/>
            <person name="Purnelle B."/>
            <person name="Rapoport G."/>
            <person name="Rey M."/>
            <person name="Reynolds S."/>
            <person name="Rieger M."/>
            <person name="Rivolta C."/>
            <person name="Rocha E."/>
            <person name="Roche B."/>
            <person name="Rose M."/>
            <person name="Sadaie Y."/>
            <person name="Sato T."/>
            <person name="Scanlan E."/>
            <person name="Schleich S."/>
            <person name="Schroeter R."/>
            <person name="Scoffone F."/>
            <person name="Sekiguchi J."/>
            <person name="Sekowska A."/>
            <person name="Seror S.J."/>
            <person name="Serror P."/>
            <person name="Shin B.-S."/>
            <person name="Soldo B."/>
            <person name="Sorokin A."/>
            <person name="Tacconi E."/>
            <person name="Takagi T."/>
            <person name="Takahashi H."/>
            <person name="Takemaru K."/>
            <person name="Takeuchi M."/>
            <person name="Tamakoshi A."/>
            <person name="Tanaka T."/>
            <person name="Terpstra P."/>
            <person name="Tognoni A."/>
            <person name="Tosato V."/>
            <person name="Uchiyama S."/>
            <person name="Vandenbol M."/>
            <person name="Vannier F."/>
            <person name="Vassarotti A."/>
            <person name="Viari A."/>
            <person name="Wambutt R."/>
            <person name="Wedler E."/>
            <person name="Wedler H."/>
            <person name="Weitzenegger T."/>
            <person name="Winters P."/>
            <person name="Wipat A."/>
            <person name="Yamamoto H."/>
            <person name="Yamane K."/>
            <person name="Yasumoto K."/>
            <person name="Yata K."/>
            <person name="Yoshida K."/>
            <person name="Yoshikawa H.-F."/>
            <person name="Zumstein E."/>
            <person name="Yoshikawa H."/>
            <person name="Danchin A."/>
        </authorList>
    </citation>
    <scope>NUCLEOTIDE SEQUENCE [LARGE SCALE GENOMIC DNA]</scope>
    <source>
        <strain>168</strain>
    </source>
</reference>
<reference key="3">
    <citation type="journal article" date="2000" name="Biochem. J.">
        <title>Interaction of Bacillus subtilis CsaA with SecA and precursor proteins.</title>
        <authorList>
            <person name="Mueller J.P."/>
            <person name="Ozegowski J."/>
            <person name="Vettermann S."/>
            <person name="Swaving J."/>
            <person name="Van Wely K.H."/>
            <person name="Driessen A.J."/>
        </authorList>
    </citation>
    <scope>PROTEIN SEQUENCE OF 33-42</scope>
    <scope>SUBUNIT</scope>
    <source>
        <strain>168 / DB104</strain>
    </source>
</reference>
<reference key="4">
    <citation type="journal article" date="2010" name="Proc. Natl. Acad. Sci. U.S.A.">
        <title>Imaging mass spectrometry of intraspecies metabolic exchange revealed the cannibalistic factors of Bacillus subtilis.</title>
        <authorList>
            <person name="Liu W.T."/>
            <person name="Yang Y.L."/>
            <person name="Xu Y."/>
            <person name="Lamsa A."/>
            <person name="Haste N.M."/>
            <person name="Yang J.Y."/>
            <person name="Ng J."/>
            <person name="Gonzalez D."/>
            <person name="Ellermeier C.D."/>
            <person name="Straight P.D."/>
            <person name="Pevzner P.A."/>
            <person name="Pogliano J."/>
            <person name="Nizet V."/>
            <person name="Pogliano K."/>
            <person name="Dorrestein P.C."/>
        </authorList>
    </citation>
    <scope>PROTEIN SEQUENCE OF 141-182</scope>
    <scope>FUNCTION</scope>
    <scope>IDENTIFICATION OF ACTIVE PEPTIDE</scope>
    <scope>MASS SPECTROMETRY</scope>
    <scope>DISULFIDE BOND</scope>
    <scope>DISRUPTION PHENOTYPE</scope>
    <source>
        <strain>168 / PY79</strain>
    </source>
</reference>
<reference key="5">
    <citation type="journal article" date="2003" name="Science">
        <title>Cannibalism by sporulating bacteria.</title>
        <authorList>
            <person name="Gonzalez-Pastor J.E."/>
            <person name="Hobbs E.C."/>
            <person name="Losick R."/>
        </authorList>
    </citation>
    <scope>PROTEIN SEQUENCE OF 142-169</scope>
    <scope>FUNCTION IN INDUCTION OF SDPR-SDPI OPERON</scope>
    <scope>SUBCELLULAR LOCATION</scope>
    <scope>INDUCTION</scope>
    <scope>DISRUPTION PHENOTYPE</scope>
    <source>
        <strain>168 / PY79</strain>
    </source>
</reference>
<reference key="6">
    <citation type="journal article" date="2003" name="FEMS Microbiol. Lett.">
        <title>Interaction of the Bacillus subtilis chaperone CsaA with the secretory protein YvaY.</title>
        <authorList>
            <person name="Linde D."/>
            <person name="Volkmer-Engert R."/>
            <person name="Schreiber S."/>
            <person name="Mueller J.P."/>
        </authorList>
    </citation>
    <scope>SUBUNIT</scope>
</reference>
<reference key="7">
    <citation type="journal article" date="2003" name="FEMS Microbiol. Lett.">
        <title>Characterisation of preYvaY export reveals differences in the substrate specificities of Bacillus subtilis and Escherichia coli leader peptidases.</title>
        <authorList>
            <person name="Linde D."/>
            <person name="Marischen L."/>
            <person name="Mueller J.P."/>
        </authorList>
    </citation>
    <scope>SUBCELLULAR LOCATION</scope>
    <scope>SIGNAL PEPTIDE PROCESSING</scope>
    <scope>INDUCTION</scope>
    <source>
        <strain>168 / DB104</strain>
    </source>
</reference>
<reference key="8">
    <citation type="journal article" date="2006" name="Cell">
        <title>A three-protein signaling pathway governing immunity to a bacterial cannibalism toxin.</title>
        <authorList>
            <person name="Ellermeier C.D."/>
            <person name="Hobbs E.C."/>
            <person name="Gonzalez-Pastor J.E."/>
            <person name="Losick R."/>
        </authorList>
    </citation>
    <scope>FUNCTION</scope>
    <source>
        <strain>168 / PY79</strain>
    </source>
</reference>
<reference key="9">
    <citation type="journal article" date="2007" name="J. Bacteriol.">
        <title>Abh and AbrB control of Bacillus subtilis antimicrobial gene expression.</title>
        <authorList>
            <person name="Strauch M.A."/>
            <person name="Bobay B.G."/>
            <person name="Cavanagh J."/>
            <person name="Yao F."/>
            <person name="Wilson A."/>
            <person name="Le Breton Y."/>
        </authorList>
    </citation>
    <scope>REPRESSION BY ABRB AND ABH</scope>
</reference>
<reference key="10">
    <citation type="journal article" date="2012" name="Mol. Microbiol.">
        <title>The Bacillus subtilis cannibalism toxin SDP collapses the proton motive force and induces autolysis.</title>
        <authorList>
            <person name="Lamsa A."/>
            <person name="Liu W.T."/>
            <person name="Dorrestein P.C."/>
            <person name="Pogliano K."/>
        </authorList>
    </citation>
    <scope>FUNCTION</scope>
    <source>
        <strain>168 / PY79</strain>
    </source>
</reference>
<reference key="11">
    <citation type="journal article" date="2013" name="J. Bacteriol.">
        <title>Production of the cannibalism toxin SDP is a multistep process that requires SdpA and SdpB.</title>
        <authorList>
            <person name="Perez Morales T.G."/>
            <person name="Ho T.D."/>
            <person name="Liu W.T."/>
            <person name="Dorrestein P.C."/>
            <person name="Ellermeier C.D."/>
        </authorList>
    </citation>
    <scope>SUBCELLULAR LOCATION</scope>
    <scope>DISRUPTION PHENOTYPE</scope>
    <scope>DISULFIDE BOND</scope>
    <scope>MUTAGENESIS OF THR-30; 141-CYS--CYS-147; CYS-141 AND CYS-147</scope>
    <source>
        <strain>168 / PY79</strain>
    </source>
</reference>
<feature type="signal peptide" evidence="1">
    <location>
        <begin position="1"/>
        <end position="32"/>
    </location>
</feature>
<feature type="chain" id="PRO_0000435137" description="Sporulation delaying protein C" evidence="1">
    <location>
        <begin position="33"/>
        <end position="203"/>
    </location>
</feature>
<feature type="propeptide" id="PRO_0000435138" description="Removed in mature form" evidence="7">
    <location>
        <begin position="33"/>
        <end position="140"/>
    </location>
</feature>
<feature type="chain" id="PRO_0000013732" description="Sporulation delaying protein" evidence="7">
    <location>
        <begin position="141"/>
        <end position="182"/>
    </location>
</feature>
<feature type="propeptide" id="PRO_0000435139" description="Removed in mature form" evidence="7">
    <location>
        <begin position="183"/>
        <end position="203"/>
    </location>
</feature>
<feature type="disulfide bond" evidence="7 9">
    <location>
        <begin position="141"/>
        <end position="147"/>
    </location>
</feature>
<feature type="mutagenesis site" description="Reduced amounts of pro-SdpC produced, no proSdpC is secreted, decreased amounts of SdpI expressed, decreased toxicity." evidence="9">
    <original>T</original>
    <variation>H</variation>
    <location>
        <position position="30"/>
    </location>
</feature>
<feature type="mutagenesis site" description="7-fold decrease in induction of SdpI, decreased toxicity of SDP." evidence="9">
    <original>CGLYAVC</original>
    <variation>AGLYAVA</variation>
    <location>
        <begin position="141"/>
        <end position="147"/>
    </location>
</feature>
<feature type="mutagenesis site" description="7-fold decrease in induction of SdpI, decreased toxicity of SDP." evidence="9">
    <original>C</original>
    <variation>A</variation>
    <location>
        <position position="141"/>
    </location>
</feature>
<feature type="mutagenesis site" description="7-fold decrease in induction of SdpI, decreased toxicity of SDP." evidence="9">
    <original>C</original>
    <variation>A</variation>
    <location>
        <position position="147"/>
    </location>
</feature>
<feature type="sequence conflict" description="In Ref. 5; AA sequence." evidence="13" ref="5">
    <location>
        <position position="161"/>
    </location>
</feature>
<accession>O34344</accession>
<gene>
    <name evidence="10" type="primary">sdpC</name>
    <name type="synonym">yvaY</name>
    <name type="ordered locus">BSU33770</name>
</gene>
<dbReference type="EMBL" id="AB006738">
    <property type="protein sequence ID" value="BAA21902.1"/>
    <property type="molecule type" value="Genomic_DNA"/>
</dbReference>
<dbReference type="EMBL" id="AL009126">
    <property type="protein sequence ID" value="CAB15382.1"/>
    <property type="molecule type" value="Genomic_DNA"/>
</dbReference>
<dbReference type="PIR" id="B70029">
    <property type="entry name" value="B70029"/>
</dbReference>
<dbReference type="RefSeq" id="WP_003243360.1">
    <property type="nucleotide sequence ID" value="NZ_OZ025638.1"/>
</dbReference>
<dbReference type="SMR" id="O34344"/>
<dbReference type="FunCoup" id="O34344">
    <property type="interactions" value="20"/>
</dbReference>
<dbReference type="STRING" id="224308.BSU33770"/>
<dbReference type="TCDB" id="9.B.139.1.1">
    <property type="family name" value="the pmf-dissipating cannabalism toxin sdpc (sdpc) family"/>
</dbReference>
<dbReference type="PaxDb" id="224308-BSU33770"/>
<dbReference type="EnsemblBacteria" id="CAB15382">
    <property type="protein sequence ID" value="CAB15382"/>
    <property type="gene ID" value="BSU_33770"/>
</dbReference>
<dbReference type="GeneID" id="936227"/>
<dbReference type="KEGG" id="bsu:BSU33770"/>
<dbReference type="PATRIC" id="fig|224308.179.peg.3662"/>
<dbReference type="InParanoid" id="O34344"/>
<dbReference type="OrthoDB" id="2928270at2"/>
<dbReference type="BioCyc" id="BSUB:BSU33770-MONOMER"/>
<dbReference type="Proteomes" id="UP000001570">
    <property type="component" value="Chromosome"/>
</dbReference>
<dbReference type="GO" id="GO:0005576">
    <property type="term" value="C:extracellular region"/>
    <property type="evidence" value="ECO:0007669"/>
    <property type="project" value="UniProtKB-SubCell"/>
</dbReference>
<dbReference type="GO" id="GO:0090729">
    <property type="term" value="F:toxin activity"/>
    <property type="evidence" value="ECO:0007669"/>
    <property type="project" value="UniProtKB-KW"/>
</dbReference>
<dbReference type="GO" id="GO:0001906">
    <property type="term" value="P:cell killing"/>
    <property type="evidence" value="ECO:0000314"/>
    <property type="project" value="UniProtKB"/>
</dbReference>
<dbReference type="GO" id="GO:0042742">
    <property type="term" value="P:defense response to bacterium"/>
    <property type="evidence" value="ECO:0007669"/>
    <property type="project" value="UniProtKB-KW"/>
</dbReference>
<dbReference type="GO" id="GO:0031640">
    <property type="term" value="P:killing of cells of another organism"/>
    <property type="evidence" value="ECO:0007669"/>
    <property type="project" value="UniProtKB-KW"/>
</dbReference>
<dbReference type="InterPro" id="IPR023888">
    <property type="entry name" value="SdpC-like"/>
</dbReference>
<dbReference type="NCBIfam" id="TIGR04032">
    <property type="entry name" value="toxin_SdpC"/>
    <property type="match status" value="1"/>
</dbReference>
<comment type="function">
    <text evidence="2 5 7 8">Produces a 42-residue extracellular sporulation delaying protein (SDP) that collapses the proton motive force (probably both the membrane potential and pH gradient) across the cell membrane, which leads to autolysis; may form a proton channel (PubMed:22469514). Induces the lysis of other B.subtilis cells that have not entered the sporulation pathway, inducing cannibalism to provide a source of nutrients to support sporulation, and at the same time delaying commitment to the energetically expensive and irreversible onset of sporulation (PubMed:12817086). Addition of SDP to liquid cultures halts growth, leads to increased cell permeability and eventually cell lysis in a significant subset of the population, although some cells survive and resume growth after a lag period (PubMed:20805502). Effects of SDP are irreversible within 10 minutes (PubMed:22469514). Addition of SDP to solid cultures induces killing, it is much more effective than SKF (AC O31422) (PubMed:20805502). Has antibiotic action against Gram-positive Firmicutes (L.acidophilus, M.megaterium, P.polymyxa, S.aureus, S.epidermidis) but not Actinobacteria M.luteus or Gram-negative P.aeruginosa or K.pneumoniae (PubMed:20805502, PubMed:22469514). SDP induces expression of the sdpR-sdpI operon (PubMed:12817086). Its maturation is dependent on SdpA and SdpB. Also functions as a ligand, binds to SdpI triggering a signal transduction cascade that protects the cell against the toxic effects of its own SDP.</text>
</comment>
<comment type="subunit">
    <text evidence="3 14">Proprotein probably interacts with chaperone CsaA.</text>
</comment>
<comment type="subcellular location">
    <subcellularLocation>
        <location evidence="2 4 9">Secreted</location>
    </subcellularLocation>
    <text>Produces a secreted protein originating from this gene (PubMed:12817086), secreted by the general secretory pathway (PubMed:14568161).</text>
</comment>
<comment type="induction">
    <text evidence="2 4 6">By Spo0A during nutrient starvation, through its direct negative control of AbrB (PubMed:12817086). Repressed by AbrB during regular growth when nutrients are plentiful, in association with the transcriptional repressor Abh (PubMed:17720793). Protein not detected during exponential growth, accumulates during stationary phase (at protein level) (PubMed:14568161).</text>
</comment>
<comment type="PTM">
    <text evidence="4 9">Production of active SDP (able to induce SdpI and kill cells) is a multi-step process that requires signal peptide cleavage (probably by SipS or SipT) (PubMed:14568161) as well as SdpA and SdpB. The disulfide bond is not required for maximum toxicity (PubMed:23687264).</text>
</comment>
<comment type="mass spectrometry" mass="4311.209" method="MALDI" evidence="7">
    <molecule>Sporulation delaying protein</molecule>
    <text>Includes a disulfide bond.</text>
</comment>
<comment type="disruption phenotype">
    <text evidence="2 7 9">When the sdpA-sdpB-sdpC operon is deleted, increased rate of spore formation; a double operon deletion (sdpA-sdpC plus skfA-skfH) makes spores even faster (PubMed:12817086). In a single gene deletion no SDP is produced (PubMed:20805502, PubMed:23687264).</text>
</comment>
<comment type="online information" name="Protein Spotlight">
    <link uri="https://www.proteinspotlight.org/back_issues/090"/>
    <text>I'll have you for supper - Issue 90 of January 2008</text>
</comment>
<keyword id="KW-0044">Antibiotic</keyword>
<keyword id="KW-0929">Antimicrobial</keyword>
<keyword id="KW-0078">Bacteriocin</keyword>
<keyword id="KW-0903">Direct protein sequencing</keyword>
<keyword id="KW-1015">Disulfide bond</keyword>
<keyword id="KW-1185">Reference proteome</keyword>
<keyword id="KW-0964">Secreted</keyword>
<keyword id="KW-0732">Signal</keyword>
<keyword id="KW-0800">Toxin</keyword>
<keyword id="KW-0843">Virulence</keyword>
<proteinExistence type="evidence at protein level"/>
<protein>
    <recommendedName>
        <fullName evidence="11">Sporulation delaying protein C</fullName>
        <shortName>SdpC</shortName>
    </recommendedName>
    <alternativeName>
        <fullName evidence="12">Cannibalism toxin SDP</fullName>
    </alternativeName>
    <alternativeName>
        <fullName>Killing factor SdpC</fullName>
    </alternativeName>
    <alternativeName>
        <fullName>Toxic peptide SdpC</fullName>
    </alternativeName>
    <component>
        <recommendedName>
            <fullName evidence="11">Sporulation delaying protein</fullName>
            <shortName evidence="11">SDP</shortName>
        </recommendedName>
    </component>
</protein>